<gene>
    <name type="primary">cadC</name>
    <name type="ordered locus">pli0060</name>
</gene>
<sequence>MNNEICEITCIHEDKVNRAKSKLANFDTPSVSGFFKILSDENRLKIVHALVHEDELCVCDIANIIDASVATTSHHLNSLKKLGVVDSHKDGKLVYYFIKNIKILNLMELGVNFKEEVLA</sequence>
<dbReference type="EMBL" id="AL592102">
    <property type="protein sequence ID" value="CAC42058.1"/>
    <property type="molecule type" value="Genomic_DNA"/>
</dbReference>
<dbReference type="RefSeq" id="WP_003726380.1">
    <property type="nucleotide sequence ID" value="NC_003383.1"/>
</dbReference>
<dbReference type="SMR" id="P0A4U2"/>
<dbReference type="KEGG" id="lin:pli0060"/>
<dbReference type="eggNOG" id="COG0640">
    <property type="taxonomic scope" value="Bacteria"/>
</dbReference>
<dbReference type="HOGENOM" id="CLU_097806_7_3_9"/>
<dbReference type="OrthoDB" id="9794330at2"/>
<dbReference type="Proteomes" id="UP000002513">
    <property type="component" value="Plasmid pLI100"/>
</dbReference>
<dbReference type="GO" id="GO:0003677">
    <property type="term" value="F:DNA binding"/>
    <property type="evidence" value="ECO:0007669"/>
    <property type="project" value="UniProtKB-KW"/>
</dbReference>
<dbReference type="GO" id="GO:0003700">
    <property type="term" value="F:DNA-binding transcription factor activity"/>
    <property type="evidence" value="ECO:0007669"/>
    <property type="project" value="InterPro"/>
</dbReference>
<dbReference type="GO" id="GO:0046872">
    <property type="term" value="F:metal ion binding"/>
    <property type="evidence" value="ECO:0007669"/>
    <property type="project" value="UniProtKB-KW"/>
</dbReference>
<dbReference type="GO" id="GO:0046686">
    <property type="term" value="P:response to cadmium ion"/>
    <property type="evidence" value="ECO:0007669"/>
    <property type="project" value="UniProtKB-KW"/>
</dbReference>
<dbReference type="CDD" id="cd00090">
    <property type="entry name" value="HTH_ARSR"/>
    <property type="match status" value="1"/>
</dbReference>
<dbReference type="Gene3D" id="1.10.10.10">
    <property type="entry name" value="Winged helix-like DNA-binding domain superfamily/Winged helix DNA-binding domain"/>
    <property type="match status" value="1"/>
</dbReference>
<dbReference type="InterPro" id="IPR011991">
    <property type="entry name" value="ArsR-like_HTH"/>
</dbReference>
<dbReference type="InterPro" id="IPR018334">
    <property type="entry name" value="ArsR_HTH"/>
</dbReference>
<dbReference type="InterPro" id="IPR001845">
    <property type="entry name" value="HTH_ArsR_DNA-bd_dom"/>
</dbReference>
<dbReference type="InterPro" id="IPR051011">
    <property type="entry name" value="Metal_resp_trans_reg"/>
</dbReference>
<dbReference type="InterPro" id="IPR036388">
    <property type="entry name" value="WH-like_DNA-bd_sf"/>
</dbReference>
<dbReference type="InterPro" id="IPR036390">
    <property type="entry name" value="WH_DNA-bd_sf"/>
</dbReference>
<dbReference type="NCBIfam" id="NF033788">
    <property type="entry name" value="HTH_metalloreg"/>
    <property type="match status" value="1"/>
</dbReference>
<dbReference type="PANTHER" id="PTHR43132">
    <property type="entry name" value="ARSENICAL RESISTANCE OPERON REPRESSOR ARSR-RELATED"/>
    <property type="match status" value="1"/>
</dbReference>
<dbReference type="PANTHER" id="PTHR43132:SF6">
    <property type="entry name" value="HTH-TYPE TRANSCRIPTIONAL REPRESSOR CZRA"/>
    <property type="match status" value="1"/>
</dbReference>
<dbReference type="Pfam" id="PF01022">
    <property type="entry name" value="HTH_5"/>
    <property type="match status" value="1"/>
</dbReference>
<dbReference type="PRINTS" id="PR00778">
    <property type="entry name" value="HTHARSR"/>
</dbReference>
<dbReference type="SMART" id="SM00418">
    <property type="entry name" value="HTH_ARSR"/>
    <property type="match status" value="1"/>
</dbReference>
<dbReference type="SUPFAM" id="SSF46785">
    <property type="entry name" value="Winged helix' DNA-binding domain"/>
    <property type="match status" value="1"/>
</dbReference>
<dbReference type="PROSITE" id="PS00846">
    <property type="entry name" value="HTH_ARSR_1"/>
    <property type="match status" value="1"/>
</dbReference>
<dbReference type="PROSITE" id="PS50987">
    <property type="entry name" value="HTH_ARSR_2"/>
    <property type="match status" value="1"/>
</dbReference>
<accession>P0A4U2</accession>
<accession>P94887</accession>
<feature type="chain" id="PRO_0000160618" description="Cadmium resistance transcriptional regulatory protein CadC">
    <location>
        <begin position="1"/>
        <end position="119"/>
    </location>
</feature>
<feature type="domain" description="HTH arsR-type" evidence="2">
    <location>
        <begin position="23"/>
        <end position="118"/>
    </location>
</feature>
<feature type="DNA-binding region" description="H-T-H motif" evidence="2">
    <location>
        <begin position="58"/>
        <end position="77"/>
    </location>
</feature>
<feature type="binding site" evidence="2">
    <location>
        <position position="6"/>
    </location>
    <ligand>
        <name>Cd(2+)</name>
        <dbReference type="ChEBI" id="CHEBI:48775"/>
        <note>ligand shared between dimeric partners</note>
    </ligand>
</feature>
<feature type="binding site" evidence="2">
    <location>
        <position position="10"/>
    </location>
    <ligand>
        <name>Cd(2+)</name>
        <dbReference type="ChEBI" id="CHEBI:48775"/>
        <note>ligand shared between dimeric partners</note>
    </ligand>
</feature>
<feature type="binding site" evidence="2">
    <location>
        <position position="57"/>
    </location>
    <ligand>
        <name>Cd(2+)</name>
        <dbReference type="ChEBI" id="CHEBI:48775"/>
        <note>ligand shared between dimeric partners</note>
    </ligand>
</feature>
<feature type="binding site" evidence="2">
    <location>
        <position position="59"/>
    </location>
    <ligand>
        <name>Cd(2+)</name>
        <dbReference type="ChEBI" id="CHEBI:48775"/>
        <note>ligand shared between dimeric partners</note>
    </ligand>
</feature>
<keyword id="KW-0104">Cadmium</keyword>
<keyword id="KW-0105">Cadmium resistance</keyword>
<keyword id="KW-0238">DNA-binding</keyword>
<keyword id="KW-0479">Metal-binding</keyword>
<keyword id="KW-0614">Plasmid</keyword>
<keyword id="KW-0804">Transcription</keyword>
<keyword id="KW-0805">Transcription regulation</keyword>
<evidence type="ECO:0000250" key="1"/>
<evidence type="ECO:0000255" key="2">
    <source>
        <dbReference type="PROSITE-ProRule" id="PRU00340"/>
    </source>
</evidence>
<comment type="function">
    <text evidence="1">Metal-binding repressor for the cad operon. Involved in resistance to heavy metals, such as cadmium, bismuth, zinc or lead. Metal binding causes the repressor to dissociate from the DNA (By similarity).</text>
</comment>
<comment type="subunit">
    <text evidence="1">Homodimer.</text>
</comment>
<proteinExistence type="inferred from homology"/>
<name>CADC_LISIN</name>
<protein>
    <recommendedName>
        <fullName>Cadmium resistance transcriptional regulatory protein CadC</fullName>
    </recommendedName>
    <alternativeName>
        <fullName>Cadmium efflux system accessory protein</fullName>
    </alternativeName>
</protein>
<reference key="1">
    <citation type="journal article" date="2001" name="Science">
        <title>Comparative genomics of Listeria species.</title>
        <authorList>
            <person name="Glaser P."/>
            <person name="Frangeul L."/>
            <person name="Buchrieser C."/>
            <person name="Rusniok C."/>
            <person name="Amend A."/>
            <person name="Baquero F."/>
            <person name="Berche P."/>
            <person name="Bloecker H."/>
            <person name="Brandt P."/>
            <person name="Chakraborty T."/>
            <person name="Charbit A."/>
            <person name="Chetouani F."/>
            <person name="Couve E."/>
            <person name="de Daruvar A."/>
            <person name="Dehoux P."/>
            <person name="Domann E."/>
            <person name="Dominguez-Bernal G."/>
            <person name="Duchaud E."/>
            <person name="Durant L."/>
            <person name="Dussurget O."/>
            <person name="Entian K.-D."/>
            <person name="Fsihi H."/>
            <person name="Garcia-del Portillo F."/>
            <person name="Garrido P."/>
            <person name="Gautier L."/>
            <person name="Goebel W."/>
            <person name="Gomez-Lopez N."/>
            <person name="Hain T."/>
            <person name="Hauf J."/>
            <person name="Jackson D."/>
            <person name="Jones L.-M."/>
            <person name="Kaerst U."/>
            <person name="Kreft J."/>
            <person name="Kuhn M."/>
            <person name="Kunst F."/>
            <person name="Kurapkat G."/>
            <person name="Madueno E."/>
            <person name="Maitournam A."/>
            <person name="Mata Vicente J."/>
            <person name="Ng E."/>
            <person name="Nedjari H."/>
            <person name="Nordsiek G."/>
            <person name="Novella S."/>
            <person name="de Pablos B."/>
            <person name="Perez-Diaz J.-C."/>
            <person name="Purcell R."/>
            <person name="Remmel B."/>
            <person name="Rose M."/>
            <person name="Schlueter T."/>
            <person name="Simoes N."/>
            <person name="Tierrez A."/>
            <person name="Vazquez-Boland J.-A."/>
            <person name="Voss H."/>
            <person name="Wehland J."/>
            <person name="Cossart P."/>
        </authorList>
    </citation>
    <scope>NUCLEOTIDE SEQUENCE [LARGE SCALE GENOMIC DNA]</scope>
    <source>
        <strain>ATCC BAA-680 / CLIP 11262</strain>
    </source>
</reference>
<organism>
    <name type="scientific">Listeria innocua serovar 6a (strain ATCC BAA-680 / CLIP 11262)</name>
    <dbReference type="NCBI Taxonomy" id="272626"/>
    <lineage>
        <taxon>Bacteria</taxon>
        <taxon>Bacillati</taxon>
        <taxon>Bacillota</taxon>
        <taxon>Bacilli</taxon>
        <taxon>Bacillales</taxon>
        <taxon>Listeriaceae</taxon>
        <taxon>Listeria</taxon>
    </lineage>
</organism>
<geneLocation type="plasmid">
    <name>pLI100</name>
</geneLocation>